<organism>
    <name type="scientific">Rana latastei</name>
    <name type="common">Italian agile frog</name>
    <dbReference type="NCBI Taxonomy" id="151453"/>
    <lineage>
        <taxon>Eukaryota</taxon>
        <taxon>Metazoa</taxon>
        <taxon>Chordata</taxon>
        <taxon>Craniata</taxon>
        <taxon>Vertebrata</taxon>
        <taxon>Euteleostomi</taxon>
        <taxon>Amphibia</taxon>
        <taxon>Batrachia</taxon>
        <taxon>Anura</taxon>
        <taxon>Neobatrachia</taxon>
        <taxon>Ranoidea</taxon>
        <taxon>Ranidae</taxon>
        <taxon>Rana</taxon>
        <taxon>Rana</taxon>
    </lineage>
</organism>
<protein>
    <recommendedName>
        <fullName evidence="3">Temporin-1LT</fullName>
    </recommendedName>
</protein>
<proteinExistence type="evidence at protein level"/>
<dbReference type="GO" id="GO:0005576">
    <property type="term" value="C:extracellular region"/>
    <property type="evidence" value="ECO:0007669"/>
    <property type="project" value="UniProtKB-SubCell"/>
</dbReference>
<dbReference type="GO" id="GO:0042742">
    <property type="term" value="P:defense response to bacterium"/>
    <property type="evidence" value="ECO:0007669"/>
    <property type="project" value="UniProtKB-KW"/>
</dbReference>
<feature type="chain" id="PRO_0000454223" description="Temporin-1LT">
    <location>
        <begin position="1"/>
        <end position="13"/>
    </location>
</feature>
<feature type="modified residue" description="Leucine amide" evidence="2">
    <location>
        <position position="13"/>
    </location>
</feature>
<feature type="unsure residue" description="Assigned by comparison with orthologs" evidence="5">
    <location>
        <position position="4"/>
    </location>
</feature>
<feature type="unsure residue" description="Assigned by comparison with orthologs" evidence="5">
    <location>
        <position position="5"/>
    </location>
</feature>
<feature type="unsure residue" description="Assigned by comparison with orthologs" evidence="5">
    <location>
        <position position="8"/>
    </location>
</feature>
<feature type="unsure residue" description="Assigned by comparison with orthologs" evidence="5">
    <location>
        <position position="9"/>
    </location>
</feature>
<feature type="unsure residue" description="Assigned by comparison with orthologs" evidence="5">
    <location>
        <position position="12"/>
    </location>
</feature>
<feature type="unsure residue" description="Assigned by comparison with orthologs" evidence="5">
    <location>
        <position position="13"/>
    </location>
</feature>
<comment type="function">
    <text evidence="1">Antimicrobial peptide.</text>
</comment>
<comment type="subcellular location">
    <subcellularLocation>
        <location evidence="2">Secreted</location>
    </subcellularLocation>
</comment>
<comment type="tissue specificity">
    <text evidence="5">Expressed by the skin glands.</text>
</comment>
<comment type="mass spectrometry"/>
<comment type="similarity">
    <text evidence="4">Belongs to the frog skin active peptide (FSAP) family. Temporin subfamily.</text>
</comment>
<reference evidence="4" key="1">
    <citation type="journal article" date="2016" name="Rapid Commun. Mass Spectrom.">
        <title>LTQ Orbitrap Velos in routine de novo sequencing of non-tryptic skin peptides from the frog Rana latastei with traditional and reliable manual spectra interpretation.</title>
        <authorList>
            <person name="Samgina T.Y."/>
            <person name="Tolpina M.D."/>
            <person name="Trebse P."/>
            <person name="Torkar G."/>
            <person name="Artemenko K.A."/>
            <person name="Bergquist J."/>
            <person name="Lebedev A.T."/>
        </authorList>
    </citation>
    <scope>PROTEIN SEQUENCE</scope>
    <scope>IDENTIFICATION BY MASS SPECTROMETRY</scope>
    <scope>SUBCELLULAR LOCATION</scope>
    <scope>TISSUE SPECIFICITY</scope>
    <scope>AMIDATION AT LEU-13</scope>
</reference>
<keyword id="KW-0027">Amidation</keyword>
<keyword id="KW-0878">Amphibian defense peptide</keyword>
<keyword id="KW-0044">Antibiotic</keyword>
<keyword id="KW-0929">Antimicrobial</keyword>
<keyword id="KW-0903">Direct protein sequencing</keyword>
<keyword id="KW-0964">Secreted</keyword>
<sequence>FFPILGKLLSGIL</sequence>
<name>TP1_RANLT</name>
<accession>C0HLY3</accession>
<evidence type="ECO:0000250" key="1">
    <source>
        <dbReference type="UniProtKB" id="C5H0E0"/>
    </source>
</evidence>
<evidence type="ECO:0000269" key="2">
    <source>
    </source>
</evidence>
<evidence type="ECO:0000303" key="3">
    <source>
    </source>
</evidence>
<evidence type="ECO:0000305" key="4"/>
<evidence type="ECO:0000305" key="5">
    <source>
    </source>
</evidence>